<gene>
    <name evidence="1" type="primary">znuC</name>
    <name type="ordered locus">Z2910</name>
    <name type="ordered locus">ECs2568</name>
</gene>
<accession>P0A9X3</accession>
<accession>P52648</accession>
<accession>P76285</accession>
<proteinExistence type="inferred from homology"/>
<reference key="1">
    <citation type="journal article" date="2001" name="Nature">
        <title>Genome sequence of enterohaemorrhagic Escherichia coli O157:H7.</title>
        <authorList>
            <person name="Perna N.T."/>
            <person name="Plunkett G. III"/>
            <person name="Burland V."/>
            <person name="Mau B."/>
            <person name="Glasner J.D."/>
            <person name="Rose D.J."/>
            <person name="Mayhew G.F."/>
            <person name="Evans P.S."/>
            <person name="Gregor J."/>
            <person name="Kirkpatrick H.A."/>
            <person name="Posfai G."/>
            <person name="Hackett J."/>
            <person name="Klink S."/>
            <person name="Boutin A."/>
            <person name="Shao Y."/>
            <person name="Miller L."/>
            <person name="Grotbeck E.J."/>
            <person name="Davis N.W."/>
            <person name="Lim A."/>
            <person name="Dimalanta E.T."/>
            <person name="Potamousis K."/>
            <person name="Apodaca J."/>
            <person name="Anantharaman T.S."/>
            <person name="Lin J."/>
            <person name="Yen G."/>
            <person name="Schwartz D.C."/>
            <person name="Welch R.A."/>
            <person name="Blattner F.R."/>
        </authorList>
    </citation>
    <scope>NUCLEOTIDE SEQUENCE [LARGE SCALE GENOMIC DNA]</scope>
    <source>
        <strain>O157:H7 / EDL933 / ATCC 700927 / EHEC</strain>
    </source>
</reference>
<reference key="2">
    <citation type="journal article" date="2001" name="DNA Res.">
        <title>Complete genome sequence of enterohemorrhagic Escherichia coli O157:H7 and genomic comparison with a laboratory strain K-12.</title>
        <authorList>
            <person name="Hayashi T."/>
            <person name="Makino K."/>
            <person name="Ohnishi M."/>
            <person name="Kurokawa K."/>
            <person name="Ishii K."/>
            <person name="Yokoyama K."/>
            <person name="Han C.-G."/>
            <person name="Ohtsubo E."/>
            <person name="Nakayama K."/>
            <person name="Murata T."/>
            <person name="Tanaka M."/>
            <person name="Tobe T."/>
            <person name="Iida T."/>
            <person name="Takami H."/>
            <person name="Honda T."/>
            <person name="Sasakawa C."/>
            <person name="Ogasawara N."/>
            <person name="Yasunaga T."/>
            <person name="Kuhara S."/>
            <person name="Shiba T."/>
            <person name="Hattori M."/>
            <person name="Shinagawa H."/>
        </authorList>
    </citation>
    <scope>NUCLEOTIDE SEQUENCE [LARGE SCALE GENOMIC DNA]</scope>
    <source>
        <strain>O157:H7 / Sakai / RIMD 0509952 / EHEC</strain>
    </source>
</reference>
<feature type="chain" id="PRO_0000093131" description="Zinc import ATP-binding protein ZnuC">
    <location>
        <begin position="1"/>
        <end position="251"/>
    </location>
</feature>
<feature type="domain" description="ABC transporter" evidence="1">
    <location>
        <begin position="5"/>
        <end position="220"/>
    </location>
</feature>
<feature type="binding site" evidence="1">
    <location>
        <begin position="37"/>
        <end position="44"/>
    </location>
    <ligand>
        <name>ATP</name>
        <dbReference type="ChEBI" id="CHEBI:30616"/>
    </ligand>
</feature>
<feature type="sequence conflict" description="In Ref. 1; AAG56848." evidence="2" ref="1">
    <original>V</original>
    <variation>I</variation>
    <location>
        <position position="19"/>
    </location>
</feature>
<organism>
    <name type="scientific">Escherichia coli O157:H7</name>
    <dbReference type="NCBI Taxonomy" id="83334"/>
    <lineage>
        <taxon>Bacteria</taxon>
        <taxon>Pseudomonadati</taxon>
        <taxon>Pseudomonadota</taxon>
        <taxon>Gammaproteobacteria</taxon>
        <taxon>Enterobacterales</taxon>
        <taxon>Enterobacteriaceae</taxon>
        <taxon>Escherichia</taxon>
    </lineage>
</organism>
<name>ZNUC_ECO57</name>
<comment type="function">
    <text evidence="1">Part of the ABC transporter complex ZnuABC involved in zinc import. Responsible for energy coupling to the transport system.</text>
</comment>
<comment type="catalytic activity">
    <reaction evidence="1">
        <text>Zn(2+)(out) + ATP(in) + H2O(in) = Zn(2+)(in) + ADP(in) + phosphate(in) + H(+)(in)</text>
        <dbReference type="Rhea" id="RHEA:29795"/>
        <dbReference type="ChEBI" id="CHEBI:15377"/>
        <dbReference type="ChEBI" id="CHEBI:15378"/>
        <dbReference type="ChEBI" id="CHEBI:29105"/>
        <dbReference type="ChEBI" id="CHEBI:30616"/>
        <dbReference type="ChEBI" id="CHEBI:43474"/>
        <dbReference type="ChEBI" id="CHEBI:456216"/>
        <dbReference type="EC" id="7.2.2.20"/>
    </reaction>
</comment>
<comment type="subunit">
    <text evidence="1">The complex is composed of two ATP-binding proteins (ZnuC), two transmembrane proteins (ZnuB) and a solute-binding protein (ZnuA).</text>
</comment>
<comment type="subcellular location">
    <subcellularLocation>
        <location evidence="1">Cell inner membrane</location>
        <topology evidence="1">Peripheral membrane protein</topology>
    </subcellularLocation>
</comment>
<comment type="similarity">
    <text evidence="1">Belongs to the ABC transporter superfamily. Zinc importer (TC 3.A.1.15.5) family.</text>
</comment>
<sequence>MTSLVSLENVSVSFGQRRVLSDVSLELKPGKILTLLGPNGAGKSTLVRVVLGLVTPDEGVIKRNGKLRIGYVPQKLYLDTTLPLTVNRFLRLRPGTHKEDILPALKRVQAGHLINAPMQKLSGGETQRVLLARALLNRPQLLVLDEPTQGVDVNGQVALYDLIDQLRRELDCGVLMVSHDLHLVMAKTDEVLCLNHHICCSGTPEVVSLHPEFISMFGPRGAEQLGIYRHHHNHRHDLQGRIVLRRGNDRS</sequence>
<protein>
    <recommendedName>
        <fullName evidence="1">Zinc import ATP-binding protein ZnuC</fullName>
        <ecNumber evidence="1">7.2.2.20</ecNumber>
    </recommendedName>
</protein>
<evidence type="ECO:0000255" key="1">
    <source>
        <dbReference type="HAMAP-Rule" id="MF_01725"/>
    </source>
</evidence>
<evidence type="ECO:0000305" key="2"/>
<dbReference type="EC" id="7.2.2.20" evidence="1"/>
<dbReference type="EMBL" id="AE005174">
    <property type="protein sequence ID" value="AAG56848.1"/>
    <property type="molecule type" value="Genomic_DNA"/>
</dbReference>
<dbReference type="EMBL" id="BA000007">
    <property type="protein sequence ID" value="BAB35991.1"/>
    <property type="molecule type" value="Genomic_DNA"/>
</dbReference>
<dbReference type="PIR" id="H90949">
    <property type="entry name" value="H90949"/>
</dbReference>
<dbReference type="RefSeq" id="NP_310595.1">
    <property type="nucleotide sequence ID" value="NC_002695.1"/>
</dbReference>
<dbReference type="RefSeq" id="WP_000202996.1">
    <property type="nucleotide sequence ID" value="NZ_VOAI01000010.1"/>
</dbReference>
<dbReference type="SMR" id="P0A9X3"/>
<dbReference type="STRING" id="155864.Z2910"/>
<dbReference type="GeneID" id="913529"/>
<dbReference type="GeneID" id="93776132"/>
<dbReference type="KEGG" id="ece:Z2910"/>
<dbReference type="KEGG" id="ecs:ECs_2568"/>
<dbReference type="PATRIC" id="fig|386585.9.peg.2692"/>
<dbReference type="eggNOG" id="COG1121">
    <property type="taxonomic scope" value="Bacteria"/>
</dbReference>
<dbReference type="HOGENOM" id="CLU_000604_1_11_6"/>
<dbReference type="OMA" id="GHDHVHP"/>
<dbReference type="Proteomes" id="UP000000558">
    <property type="component" value="Chromosome"/>
</dbReference>
<dbReference type="Proteomes" id="UP000002519">
    <property type="component" value="Chromosome"/>
</dbReference>
<dbReference type="GO" id="GO:0005886">
    <property type="term" value="C:plasma membrane"/>
    <property type="evidence" value="ECO:0007669"/>
    <property type="project" value="UniProtKB-SubCell"/>
</dbReference>
<dbReference type="GO" id="GO:0015633">
    <property type="term" value="F:ABC-type zinc transporter activity"/>
    <property type="evidence" value="ECO:0007669"/>
    <property type="project" value="UniProtKB-EC"/>
</dbReference>
<dbReference type="GO" id="GO:0005524">
    <property type="term" value="F:ATP binding"/>
    <property type="evidence" value="ECO:0007669"/>
    <property type="project" value="UniProtKB-KW"/>
</dbReference>
<dbReference type="GO" id="GO:0016887">
    <property type="term" value="F:ATP hydrolysis activity"/>
    <property type="evidence" value="ECO:0007669"/>
    <property type="project" value="InterPro"/>
</dbReference>
<dbReference type="GO" id="GO:0010043">
    <property type="term" value="P:response to zinc ion"/>
    <property type="evidence" value="ECO:0007669"/>
    <property type="project" value="TreeGrafter"/>
</dbReference>
<dbReference type="CDD" id="cd03235">
    <property type="entry name" value="ABC_Metallic_Cations"/>
    <property type="match status" value="1"/>
</dbReference>
<dbReference type="FunFam" id="3.40.50.300:FF:000392">
    <property type="entry name" value="Zinc import ATP-binding protein ZnuC"/>
    <property type="match status" value="1"/>
</dbReference>
<dbReference type="Gene3D" id="3.40.50.300">
    <property type="entry name" value="P-loop containing nucleotide triphosphate hydrolases"/>
    <property type="match status" value="1"/>
</dbReference>
<dbReference type="InterPro" id="IPR003593">
    <property type="entry name" value="AAA+_ATPase"/>
</dbReference>
<dbReference type="InterPro" id="IPR003439">
    <property type="entry name" value="ABC_transporter-like_ATP-bd"/>
</dbReference>
<dbReference type="InterPro" id="IPR050153">
    <property type="entry name" value="Metal_Ion_Import_ABC"/>
</dbReference>
<dbReference type="InterPro" id="IPR027417">
    <property type="entry name" value="P-loop_NTPase"/>
</dbReference>
<dbReference type="NCBIfam" id="NF007090">
    <property type="entry name" value="PRK09544.1"/>
    <property type="match status" value="1"/>
</dbReference>
<dbReference type="PANTHER" id="PTHR42734">
    <property type="entry name" value="METAL TRANSPORT SYSTEM ATP-BINDING PROTEIN TM_0124-RELATED"/>
    <property type="match status" value="1"/>
</dbReference>
<dbReference type="PANTHER" id="PTHR42734:SF9">
    <property type="entry name" value="ZINC IMPORT ATP-BINDING PROTEIN ZNUC"/>
    <property type="match status" value="1"/>
</dbReference>
<dbReference type="Pfam" id="PF00005">
    <property type="entry name" value="ABC_tran"/>
    <property type="match status" value="1"/>
</dbReference>
<dbReference type="SMART" id="SM00382">
    <property type="entry name" value="AAA"/>
    <property type="match status" value="1"/>
</dbReference>
<dbReference type="SUPFAM" id="SSF52540">
    <property type="entry name" value="P-loop containing nucleoside triphosphate hydrolases"/>
    <property type="match status" value="1"/>
</dbReference>
<dbReference type="PROSITE" id="PS50893">
    <property type="entry name" value="ABC_TRANSPORTER_2"/>
    <property type="match status" value="1"/>
</dbReference>
<dbReference type="PROSITE" id="PS51298">
    <property type="entry name" value="ZNUC"/>
    <property type="match status" value="1"/>
</dbReference>
<keyword id="KW-0067">ATP-binding</keyword>
<keyword id="KW-0997">Cell inner membrane</keyword>
<keyword id="KW-1003">Cell membrane</keyword>
<keyword id="KW-0406">Ion transport</keyword>
<keyword id="KW-0472">Membrane</keyword>
<keyword id="KW-0547">Nucleotide-binding</keyword>
<keyword id="KW-1185">Reference proteome</keyword>
<keyword id="KW-1278">Translocase</keyword>
<keyword id="KW-0813">Transport</keyword>
<keyword id="KW-0862">Zinc</keyword>
<keyword id="KW-0864">Zinc transport</keyword>